<reference key="1">
    <citation type="journal article" date="2000" name="Nature">
        <title>The genome sequence of the thermoacidophilic scavenger Thermoplasma acidophilum.</title>
        <authorList>
            <person name="Ruepp A."/>
            <person name="Graml W."/>
            <person name="Santos-Martinez M.-L."/>
            <person name="Koretke K.K."/>
            <person name="Volker C."/>
            <person name="Mewes H.-W."/>
            <person name="Frishman D."/>
            <person name="Stocker S."/>
            <person name="Lupas A.N."/>
            <person name="Baumeister W."/>
        </authorList>
    </citation>
    <scope>NUCLEOTIDE SEQUENCE [LARGE SCALE GENOMIC DNA]</scope>
    <source>
        <strain>ATCC 25905 / DSM 1728 / JCM 9062 / NBRC 15155 / AMRC-C165</strain>
    </source>
</reference>
<keyword id="KW-0169">Cobalamin biosynthesis</keyword>
<keyword id="KW-0315">Glutamine amidotransferase</keyword>
<keyword id="KW-1185">Reference proteome</keyword>
<evidence type="ECO:0000250" key="1"/>
<evidence type="ECO:0000305" key="2"/>
<gene>
    <name type="primary">cobQ</name>
    <name type="ordered locus">Ta0075</name>
</gene>
<dbReference type="EMBL" id="AL445063">
    <property type="protein sequence ID" value="CAC11223.1"/>
    <property type="molecule type" value="Genomic_DNA"/>
</dbReference>
<dbReference type="SMR" id="Q9HLZ8"/>
<dbReference type="FunCoup" id="Q9HLZ8">
    <property type="interactions" value="56"/>
</dbReference>
<dbReference type="STRING" id="273075.gene:9571290"/>
<dbReference type="PaxDb" id="273075-Ta0075"/>
<dbReference type="EnsemblBacteria" id="CAC11223">
    <property type="protein sequence ID" value="CAC11223"/>
    <property type="gene ID" value="CAC11223"/>
</dbReference>
<dbReference type="KEGG" id="tac:Ta0075"/>
<dbReference type="eggNOG" id="arCOG00105">
    <property type="taxonomic scope" value="Archaea"/>
</dbReference>
<dbReference type="HOGENOM" id="CLU_019250_2_2_2"/>
<dbReference type="InParanoid" id="Q9HLZ8"/>
<dbReference type="OrthoDB" id="53136at2157"/>
<dbReference type="UniPathway" id="UPA00148"/>
<dbReference type="Proteomes" id="UP000001024">
    <property type="component" value="Chromosome"/>
</dbReference>
<dbReference type="GO" id="GO:0015420">
    <property type="term" value="F:ABC-type vitamin B12 transporter activity"/>
    <property type="evidence" value="ECO:0007669"/>
    <property type="project" value="UniProtKB-UniRule"/>
</dbReference>
<dbReference type="GO" id="GO:0003824">
    <property type="term" value="F:catalytic activity"/>
    <property type="evidence" value="ECO:0007669"/>
    <property type="project" value="InterPro"/>
</dbReference>
<dbReference type="GO" id="GO:0009236">
    <property type="term" value="P:cobalamin biosynthetic process"/>
    <property type="evidence" value="ECO:0007669"/>
    <property type="project" value="UniProtKB-UniRule"/>
</dbReference>
<dbReference type="CDD" id="cd01750">
    <property type="entry name" value="GATase1_CobQ"/>
    <property type="match status" value="1"/>
</dbReference>
<dbReference type="Gene3D" id="3.40.50.880">
    <property type="match status" value="1"/>
</dbReference>
<dbReference type="Gene3D" id="3.40.50.300">
    <property type="entry name" value="P-loop containing nucleotide triphosphate hydrolases"/>
    <property type="match status" value="1"/>
</dbReference>
<dbReference type="HAMAP" id="MF_00028">
    <property type="entry name" value="CobQ"/>
    <property type="match status" value="1"/>
</dbReference>
<dbReference type="InterPro" id="IPR029062">
    <property type="entry name" value="Class_I_gatase-like"/>
</dbReference>
<dbReference type="InterPro" id="IPR002586">
    <property type="entry name" value="CobQ/CobB/MinD/ParA_Nub-bd_dom"/>
</dbReference>
<dbReference type="InterPro" id="IPR033949">
    <property type="entry name" value="CobQ_GATase1"/>
</dbReference>
<dbReference type="InterPro" id="IPR004459">
    <property type="entry name" value="CobQ_synth"/>
</dbReference>
<dbReference type="InterPro" id="IPR011698">
    <property type="entry name" value="GATase_3"/>
</dbReference>
<dbReference type="InterPro" id="IPR027417">
    <property type="entry name" value="P-loop_NTPase"/>
</dbReference>
<dbReference type="NCBIfam" id="TIGR00313">
    <property type="entry name" value="cobQ"/>
    <property type="match status" value="1"/>
</dbReference>
<dbReference type="NCBIfam" id="NF001989">
    <property type="entry name" value="PRK00784.1"/>
    <property type="match status" value="1"/>
</dbReference>
<dbReference type="PANTHER" id="PTHR21343:SF1">
    <property type="entry name" value="COBYRIC ACID SYNTHASE"/>
    <property type="match status" value="1"/>
</dbReference>
<dbReference type="PANTHER" id="PTHR21343">
    <property type="entry name" value="DETHIOBIOTIN SYNTHETASE"/>
    <property type="match status" value="1"/>
</dbReference>
<dbReference type="Pfam" id="PF01656">
    <property type="entry name" value="CbiA"/>
    <property type="match status" value="1"/>
</dbReference>
<dbReference type="Pfam" id="PF07685">
    <property type="entry name" value="GATase_3"/>
    <property type="match status" value="1"/>
</dbReference>
<dbReference type="SUPFAM" id="SSF52317">
    <property type="entry name" value="Class I glutamine amidotransferase-like"/>
    <property type="match status" value="1"/>
</dbReference>
<dbReference type="SUPFAM" id="SSF52540">
    <property type="entry name" value="P-loop containing nucleoside triphosphate hydrolases"/>
    <property type="match status" value="1"/>
</dbReference>
<dbReference type="PROSITE" id="PS51274">
    <property type="entry name" value="GATASE_COBBQ"/>
    <property type="match status" value="1"/>
</dbReference>
<protein>
    <recommendedName>
        <fullName>Probable cobyric acid synthase</fullName>
    </recommendedName>
</protein>
<proteinExistence type="inferred from homology"/>
<name>COBQ_THEAC</name>
<sequence length="468" mass="51931">MIQVLGTSSGSGKTTIAMALSRIFFRSGYRVAPFKAVNMSLNSVIVEGEYEIARAQWLQAKAANTEPTRFMNPILLKPEGMGASQVIMLGKSLGKKTIPEYYEFIMNDGKRVIREAIDRISDDYDLIIAEGAGSPAEINLLDRDMANIYVSSIYNTPAILVGDIDRGGVFASIYGTLSLMPRPDLVRWIMINKMRGDASLLEPGLKKLENLTGKRVIGVVPYSENRLPGEDSFDYDHPRARGSKITIVRYPFMENYSDLDPLVYTSTGYNYVTAENASDLSDADLIVLPGSKNVFADLEYMRKNGIDKIIIENAGRAKILGICGGYQMLGQRITMGEISADGLGLLRAKTNYERTKTTRSVRYRVDNTLMSGTWEEGYEIHYGAVISLGGERMNETDKGPEGNVDANRLVFGTNIHGILANRSVFRFMTGRDIGEPEEYLRSEIDRFADVVKSSIDVADLIEYASSRE</sequence>
<organism>
    <name type="scientific">Thermoplasma acidophilum (strain ATCC 25905 / DSM 1728 / JCM 9062 / NBRC 15155 / AMRC-C165)</name>
    <dbReference type="NCBI Taxonomy" id="273075"/>
    <lineage>
        <taxon>Archaea</taxon>
        <taxon>Methanobacteriati</taxon>
        <taxon>Thermoplasmatota</taxon>
        <taxon>Thermoplasmata</taxon>
        <taxon>Thermoplasmatales</taxon>
        <taxon>Thermoplasmataceae</taxon>
        <taxon>Thermoplasma</taxon>
    </lineage>
</organism>
<feature type="chain" id="PRO_0000141357" description="Probable cobyric acid synthase">
    <location>
        <begin position="1"/>
        <end position="468"/>
    </location>
</feature>
<feature type="domain" description="GATase cobBQ-type">
    <location>
        <begin position="242"/>
        <end position="424"/>
    </location>
</feature>
<feature type="active site" description="Nucleophile" evidence="1">
    <location>
        <position position="323"/>
    </location>
</feature>
<feature type="active site" evidence="1">
    <location>
        <position position="416"/>
    </location>
</feature>
<accession>Q9HLZ8</accession>
<comment type="function">
    <text evidence="1">Catalyzes amidations at positions B, D, E, and G on adenosylcobyrinic A,C-diamide. NH(2) groups are provided by glutamine, and one molecule of ATP is hydrogenolyzed for each amidation (By similarity).</text>
</comment>
<comment type="pathway">
    <text>Cofactor biosynthesis; adenosylcobalamin biosynthesis.</text>
</comment>
<comment type="similarity">
    <text evidence="2">Belongs to the CobB/CobQ family. CobQ subfamily.</text>
</comment>